<comment type="function">
    <text evidence="1">Part of the ABC transporter complex MetNIQ involved in methionine import. Responsible for energy coupling to the transport system.</text>
</comment>
<comment type="catalytic activity">
    <reaction evidence="1">
        <text>L-methionine(out) + ATP + H2O = L-methionine(in) + ADP + phosphate + H(+)</text>
        <dbReference type="Rhea" id="RHEA:29779"/>
        <dbReference type="ChEBI" id="CHEBI:15377"/>
        <dbReference type="ChEBI" id="CHEBI:15378"/>
        <dbReference type="ChEBI" id="CHEBI:30616"/>
        <dbReference type="ChEBI" id="CHEBI:43474"/>
        <dbReference type="ChEBI" id="CHEBI:57844"/>
        <dbReference type="ChEBI" id="CHEBI:456216"/>
        <dbReference type="EC" id="7.4.2.11"/>
    </reaction>
</comment>
<comment type="catalytic activity">
    <reaction evidence="1">
        <text>D-methionine(out) + ATP + H2O = D-methionine(in) + ADP + phosphate + H(+)</text>
        <dbReference type="Rhea" id="RHEA:29767"/>
        <dbReference type="ChEBI" id="CHEBI:15377"/>
        <dbReference type="ChEBI" id="CHEBI:15378"/>
        <dbReference type="ChEBI" id="CHEBI:30616"/>
        <dbReference type="ChEBI" id="CHEBI:43474"/>
        <dbReference type="ChEBI" id="CHEBI:57932"/>
        <dbReference type="ChEBI" id="CHEBI:456216"/>
        <dbReference type="EC" id="7.4.2.11"/>
    </reaction>
</comment>
<comment type="subunit">
    <text evidence="1">The complex is composed of two ATP-binding proteins (MetN), two transmembrane proteins (MetI) and a solute-binding protein (MetQ).</text>
</comment>
<comment type="subcellular location">
    <subcellularLocation>
        <location evidence="1">Cell membrane</location>
        <topology evidence="1">Peripheral membrane protein</topology>
    </subcellularLocation>
</comment>
<comment type="similarity">
    <text evidence="1">Belongs to the ABC transporter superfamily. Methionine importer (TC 3.A.1.24) family.</text>
</comment>
<dbReference type="EC" id="7.4.2.11" evidence="1"/>
<dbReference type="EMBL" id="CP000003">
    <property type="protein sequence ID" value="AAT86435.1"/>
    <property type="molecule type" value="Genomic_DNA"/>
</dbReference>
<dbReference type="RefSeq" id="WP_011184185.1">
    <property type="nucleotide sequence ID" value="NC_006086.1"/>
</dbReference>
<dbReference type="SMR" id="Q5XDS8"/>
<dbReference type="KEGG" id="spa:M6_Spy0300"/>
<dbReference type="HOGENOM" id="CLU_000604_1_3_9"/>
<dbReference type="Proteomes" id="UP000001167">
    <property type="component" value="Chromosome"/>
</dbReference>
<dbReference type="GO" id="GO:0005886">
    <property type="term" value="C:plasma membrane"/>
    <property type="evidence" value="ECO:0007669"/>
    <property type="project" value="UniProtKB-SubCell"/>
</dbReference>
<dbReference type="GO" id="GO:0033232">
    <property type="term" value="F:ABC-type D-methionine transporter activity"/>
    <property type="evidence" value="ECO:0007669"/>
    <property type="project" value="UniProtKB-EC"/>
</dbReference>
<dbReference type="GO" id="GO:0005524">
    <property type="term" value="F:ATP binding"/>
    <property type="evidence" value="ECO:0007669"/>
    <property type="project" value="UniProtKB-KW"/>
</dbReference>
<dbReference type="GO" id="GO:0016887">
    <property type="term" value="F:ATP hydrolysis activity"/>
    <property type="evidence" value="ECO:0007669"/>
    <property type="project" value="InterPro"/>
</dbReference>
<dbReference type="CDD" id="cd03258">
    <property type="entry name" value="ABC_MetN_methionine_transporter"/>
    <property type="match status" value="1"/>
</dbReference>
<dbReference type="Gene3D" id="3.30.70.260">
    <property type="match status" value="1"/>
</dbReference>
<dbReference type="Gene3D" id="3.40.50.300">
    <property type="entry name" value="P-loop containing nucleotide triphosphate hydrolases"/>
    <property type="match status" value="1"/>
</dbReference>
<dbReference type="InterPro" id="IPR003593">
    <property type="entry name" value="AAA+_ATPase"/>
</dbReference>
<dbReference type="InterPro" id="IPR003439">
    <property type="entry name" value="ABC_transporter-like_ATP-bd"/>
</dbReference>
<dbReference type="InterPro" id="IPR017871">
    <property type="entry name" value="ABC_transporter-like_CS"/>
</dbReference>
<dbReference type="InterPro" id="IPR045865">
    <property type="entry name" value="ACT-like_dom_sf"/>
</dbReference>
<dbReference type="InterPro" id="IPR041701">
    <property type="entry name" value="MetN_ABC"/>
</dbReference>
<dbReference type="InterPro" id="IPR050086">
    <property type="entry name" value="MetN_ABC_transporter-like"/>
</dbReference>
<dbReference type="InterPro" id="IPR018449">
    <property type="entry name" value="NIL_domain"/>
</dbReference>
<dbReference type="InterPro" id="IPR027417">
    <property type="entry name" value="P-loop_NTPase"/>
</dbReference>
<dbReference type="PANTHER" id="PTHR43166">
    <property type="entry name" value="AMINO ACID IMPORT ATP-BINDING PROTEIN"/>
    <property type="match status" value="1"/>
</dbReference>
<dbReference type="PANTHER" id="PTHR43166:SF30">
    <property type="entry name" value="METHIONINE IMPORT ATP-BINDING PROTEIN METN"/>
    <property type="match status" value="1"/>
</dbReference>
<dbReference type="Pfam" id="PF00005">
    <property type="entry name" value="ABC_tran"/>
    <property type="match status" value="1"/>
</dbReference>
<dbReference type="Pfam" id="PF09383">
    <property type="entry name" value="NIL"/>
    <property type="match status" value="1"/>
</dbReference>
<dbReference type="SMART" id="SM00382">
    <property type="entry name" value="AAA"/>
    <property type="match status" value="1"/>
</dbReference>
<dbReference type="SMART" id="SM00930">
    <property type="entry name" value="NIL"/>
    <property type="match status" value="1"/>
</dbReference>
<dbReference type="SUPFAM" id="SSF55021">
    <property type="entry name" value="ACT-like"/>
    <property type="match status" value="1"/>
</dbReference>
<dbReference type="SUPFAM" id="SSF52540">
    <property type="entry name" value="P-loop containing nucleoside triphosphate hydrolases"/>
    <property type="match status" value="1"/>
</dbReference>
<dbReference type="PROSITE" id="PS00211">
    <property type="entry name" value="ABC_TRANSPORTER_1"/>
    <property type="match status" value="1"/>
</dbReference>
<dbReference type="PROSITE" id="PS50893">
    <property type="entry name" value="ABC_TRANSPORTER_2"/>
    <property type="match status" value="1"/>
</dbReference>
<dbReference type="PROSITE" id="PS51264">
    <property type="entry name" value="METN"/>
    <property type="match status" value="1"/>
</dbReference>
<organism>
    <name type="scientific">Streptococcus pyogenes serotype M6 (strain ATCC BAA-946 / MGAS10394)</name>
    <dbReference type="NCBI Taxonomy" id="286636"/>
    <lineage>
        <taxon>Bacteria</taxon>
        <taxon>Bacillati</taxon>
        <taxon>Bacillota</taxon>
        <taxon>Bacilli</taxon>
        <taxon>Lactobacillales</taxon>
        <taxon>Streptococcaceae</taxon>
        <taxon>Streptococcus</taxon>
    </lineage>
</organism>
<keyword id="KW-0029">Amino-acid transport</keyword>
<keyword id="KW-0067">ATP-binding</keyword>
<keyword id="KW-1003">Cell membrane</keyword>
<keyword id="KW-0472">Membrane</keyword>
<keyword id="KW-0547">Nucleotide-binding</keyword>
<keyword id="KW-1278">Translocase</keyword>
<keyword id="KW-0813">Transport</keyword>
<feature type="chain" id="PRO_0000270425" description="Methionine import ATP-binding protein MetN">
    <location>
        <begin position="1"/>
        <end position="354"/>
    </location>
</feature>
<feature type="domain" description="ABC transporter" evidence="1">
    <location>
        <begin position="8"/>
        <end position="250"/>
    </location>
</feature>
<feature type="binding site" evidence="1">
    <location>
        <begin position="42"/>
        <end position="49"/>
    </location>
    <ligand>
        <name>ATP</name>
        <dbReference type="ChEBI" id="CHEBI:30616"/>
    </ligand>
</feature>
<accession>Q5XDS8</accession>
<reference key="1">
    <citation type="journal article" date="2004" name="J. Infect. Dis.">
        <title>Progress toward characterization of the group A Streptococcus metagenome: complete genome sequence of a macrolide-resistant serotype M6 strain.</title>
        <authorList>
            <person name="Banks D.J."/>
            <person name="Porcella S.F."/>
            <person name="Barbian K.D."/>
            <person name="Beres S.B."/>
            <person name="Philips L.E."/>
            <person name="Voyich J.M."/>
            <person name="DeLeo F.R."/>
            <person name="Martin J.M."/>
            <person name="Somerville G.A."/>
            <person name="Musser J.M."/>
        </authorList>
    </citation>
    <scope>NUCLEOTIDE SEQUENCE [LARGE SCALE GENOMIC DNA]</scope>
    <source>
        <strain>ATCC BAA-946 / MGAS10394</strain>
    </source>
</reference>
<gene>
    <name evidence="1" type="primary">metN</name>
    <name type="ordered locus">M6_Spy0300</name>
</gene>
<sequence>MNEAIIQLDHIDITFRQKKRVIEAVKDVTVHINQGDIYGIVGYSGAGKSTLVRVINLLQAPTNGKITVDGDVTFDQGKIQLSANALRQKRRDIGMIFQHFNLMAQKTAKENVAFALRHSSLSKTEKEHKVIELLELVGLSERADNYPAQLSGGQKQRVAIARALANDPKILISDEATSALDPKTTKQILALLQELNRKLGLTIVMITHEMQIVKDICNRVAVMQNGVLIEEGSVLDIFSNPKEALTQKFITTATGIDEALEKINQQDIVKHLPANALLAQLKYAGTSTDEPLLNSIYRQFEVTANILYGNIEILDHIPVGDMIVVLEGQAENILAAEKALHEAGVDVSILKRGA</sequence>
<protein>
    <recommendedName>
        <fullName evidence="1">Methionine import ATP-binding protein MetN</fullName>
        <ecNumber evidence="1">7.4.2.11</ecNumber>
    </recommendedName>
</protein>
<evidence type="ECO:0000255" key="1">
    <source>
        <dbReference type="HAMAP-Rule" id="MF_01719"/>
    </source>
</evidence>
<proteinExistence type="inferred from homology"/>
<name>METN_STRP6</name>